<accession>Q29538</accession>
<gene>
    <name type="primary">SRN</name>
</gene>
<feature type="chain" id="PRO_0000057171" description="Seminal ribonuclease">
    <location>
        <begin position="1" status="less than"/>
        <end position="104" status="greater than"/>
    </location>
</feature>
<feature type="binding site" evidence="1">
    <location>
        <begin position="27"/>
        <end position="31"/>
    </location>
    <ligand>
        <name>substrate</name>
    </ligand>
</feature>
<feature type="binding site" evidence="1">
    <location>
        <position position="52"/>
    </location>
    <ligand>
        <name>substrate</name>
    </ligand>
</feature>
<feature type="binding site" evidence="1">
    <location>
        <position position="71"/>
    </location>
    <ligand>
        <name>substrate</name>
    </ligand>
</feature>
<feature type="disulfide bond" evidence="1">
    <location>
        <begin position="12"/>
        <end position="70"/>
    </location>
</feature>
<feature type="disulfide bond" description="Interchain" evidence="1">
    <location>
        <position position="18"/>
    </location>
</feature>
<feature type="disulfide bond" evidence="1">
    <location>
        <begin position="26"/>
        <end position="81"/>
    </location>
</feature>
<feature type="disulfide bond" evidence="1">
    <location>
        <begin position="44"/>
        <end position="96"/>
    </location>
</feature>
<feature type="disulfide bond" evidence="1">
    <location>
        <begin position="51"/>
        <end position="58"/>
    </location>
</feature>
<feature type="non-terminal residue">
    <location>
        <position position="1"/>
    </location>
</feature>
<feature type="non-terminal residue">
    <location>
        <position position="104"/>
    </location>
</feature>
<protein>
    <recommendedName>
        <fullName>Seminal ribonuclease</fullName>
        <shortName>Seminal RNase</shortName>
        <ecNumber>4.6.1.18</ecNumber>
    </recommendedName>
</protein>
<name>RNS_SAITA</name>
<comment type="catalytic activity">
    <reaction>
        <text>an [RNA] containing cytidine + H2O = an [RNA]-3'-cytidine-3'-phosphate + a 5'-hydroxy-ribonucleotide-3'-[RNA].</text>
        <dbReference type="EC" id="4.6.1.18"/>
    </reaction>
</comment>
<comment type="catalytic activity">
    <reaction>
        <text>an [RNA] containing uridine + H2O = an [RNA]-3'-uridine-3'-phosphate + a 5'-hydroxy-ribonucleotide-3'-[RNA].</text>
        <dbReference type="EC" id="4.6.1.18"/>
    </reaction>
</comment>
<comment type="subunit">
    <text evidence="1">Homodimer; disulfide-linked.</text>
</comment>
<comment type="subcellular location">
    <subcellularLocation>
        <location evidence="1">Secreted</location>
    </subcellularLocation>
</comment>
<comment type="similarity">
    <text evidence="2">Belongs to the pancreatic ribonuclease family.</text>
</comment>
<organism>
    <name type="scientific">Saiga tatarica</name>
    <name type="common">Saiga antelope</name>
    <dbReference type="NCBI Taxonomy" id="34875"/>
    <lineage>
        <taxon>Eukaryota</taxon>
        <taxon>Metazoa</taxon>
        <taxon>Chordata</taxon>
        <taxon>Craniata</taxon>
        <taxon>Vertebrata</taxon>
        <taxon>Euteleostomi</taxon>
        <taxon>Mammalia</taxon>
        <taxon>Eutheria</taxon>
        <taxon>Laurasiatheria</taxon>
        <taxon>Artiodactyla</taxon>
        <taxon>Ruminantia</taxon>
        <taxon>Pecora</taxon>
        <taxon>Bovidae</taxon>
        <taxon>Antilopinae</taxon>
        <taxon>Saiga</taxon>
    </lineage>
</organism>
<evidence type="ECO:0000250" key="1"/>
<evidence type="ECO:0000305" key="2"/>
<dbReference type="EC" id="4.6.1.18"/>
<dbReference type="EMBL" id="S81528">
    <property type="protein sequence ID" value="AAB39846.1"/>
    <property type="molecule type" value="Genomic_DNA"/>
</dbReference>
<dbReference type="SMR" id="Q29538"/>
<dbReference type="GO" id="GO:0005576">
    <property type="term" value="C:extracellular region"/>
    <property type="evidence" value="ECO:0007669"/>
    <property type="project" value="UniProtKB-SubCell"/>
</dbReference>
<dbReference type="GO" id="GO:0016829">
    <property type="term" value="F:lyase activity"/>
    <property type="evidence" value="ECO:0007669"/>
    <property type="project" value="UniProtKB-KW"/>
</dbReference>
<dbReference type="GO" id="GO:0003676">
    <property type="term" value="F:nucleic acid binding"/>
    <property type="evidence" value="ECO:0007669"/>
    <property type="project" value="InterPro"/>
</dbReference>
<dbReference type="GO" id="GO:0004522">
    <property type="term" value="F:ribonuclease A activity"/>
    <property type="evidence" value="ECO:0007669"/>
    <property type="project" value="UniProtKB-EC"/>
</dbReference>
<dbReference type="GO" id="GO:0050830">
    <property type="term" value="P:defense response to Gram-positive bacterium"/>
    <property type="evidence" value="ECO:0007669"/>
    <property type="project" value="TreeGrafter"/>
</dbReference>
<dbReference type="CDD" id="cd06265">
    <property type="entry name" value="RNase_A_canonical"/>
    <property type="match status" value="1"/>
</dbReference>
<dbReference type="FunFam" id="3.10.130.10:FF:000001">
    <property type="entry name" value="Ribonuclease pancreatic"/>
    <property type="match status" value="1"/>
</dbReference>
<dbReference type="Gene3D" id="3.10.130.10">
    <property type="entry name" value="Ribonuclease A-like domain"/>
    <property type="match status" value="1"/>
</dbReference>
<dbReference type="InterPro" id="IPR001427">
    <property type="entry name" value="RNaseA"/>
</dbReference>
<dbReference type="InterPro" id="IPR036816">
    <property type="entry name" value="RNaseA-like_dom_sf"/>
</dbReference>
<dbReference type="InterPro" id="IPR023411">
    <property type="entry name" value="RNaseA_AS"/>
</dbReference>
<dbReference type="InterPro" id="IPR023412">
    <property type="entry name" value="RNaseA_domain"/>
</dbReference>
<dbReference type="PANTHER" id="PTHR11437">
    <property type="entry name" value="RIBONUCLEASE"/>
    <property type="match status" value="1"/>
</dbReference>
<dbReference type="PANTHER" id="PTHR11437:SF24">
    <property type="entry name" value="RIBONUCLEASE PANCREATIC"/>
    <property type="match status" value="1"/>
</dbReference>
<dbReference type="Pfam" id="PF00074">
    <property type="entry name" value="RnaseA"/>
    <property type="match status" value="1"/>
</dbReference>
<dbReference type="PRINTS" id="PR00794">
    <property type="entry name" value="RIBONUCLEASE"/>
</dbReference>
<dbReference type="SMART" id="SM00092">
    <property type="entry name" value="RNAse_Pc"/>
    <property type="match status" value="1"/>
</dbReference>
<dbReference type="SUPFAM" id="SSF54076">
    <property type="entry name" value="RNase A-like"/>
    <property type="match status" value="1"/>
</dbReference>
<dbReference type="PROSITE" id="PS00127">
    <property type="entry name" value="RNASE_PANCREATIC"/>
    <property type="match status" value="1"/>
</dbReference>
<keyword id="KW-1015">Disulfide bond</keyword>
<keyword id="KW-0255">Endonuclease</keyword>
<keyword id="KW-0378">Hydrolase</keyword>
<keyword id="KW-0456">Lyase</keyword>
<keyword id="KW-0540">Nuclease</keyword>
<keyword id="KW-0964">Secreted</keyword>
<sequence length="104" mass="11377">SGSSPSSNSNYCNVMMFCRKMTQGKCKPVNTFAHEFLADVQAVCSQKKVTCKNGQTNCYQSNSAMSITDCRQTGSSKYPNCAYKTTQAQKHIIVACEGNPYVPV</sequence>
<proteinExistence type="inferred from homology"/>
<reference key="1">
    <citation type="journal article" date="1996" name="FEBS Lett.">
        <title>Pseudogenes in ribonuclease evolution: a source of new biomacromolecular function?</title>
        <authorList>
            <person name="Trabesinger-Ruef N."/>
            <person name="Jermann T."/>
            <person name="Zankel T."/>
            <person name="Durrant B."/>
            <person name="Frank G."/>
            <person name="Benner S.A."/>
        </authorList>
    </citation>
    <scope>NUCLEOTIDE SEQUENCE [GENOMIC DNA]</scope>
    <source>
        <tissue>Semen</tissue>
    </source>
</reference>